<accession>P63066</accession>
<accession>O77826</accession>
<proteinExistence type="inferred from homology"/>
<feature type="signal peptide" evidence="1">
    <location>
        <begin position="1"/>
        <end position="20"/>
    </location>
</feature>
<feature type="chain" id="PRO_0000018772" description="Beta-2-microglobulin">
    <location>
        <begin position="21"/>
        <end position="119"/>
    </location>
</feature>
<feature type="domain" description="Ig-like C1-type">
    <location>
        <begin position="25"/>
        <end position="114"/>
    </location>
</feature>
<feature type="disulfide bond" evidence="2">
    <location>
        <begin position="45"/>
        <end position="100"/>
    </location>
</feature>
<organism>
    <name type="scientific">Sapajus apella</name>
    <name type="common">Brown-capped capuchin</name>
    <name type="synonym">Cebus apella</name>
    <dbReference type="NCBI Taxonomy" id="9515"/>
    <lineage>
        <taxon>Eukaryota</taxon>
        <taxon>Metazoa</taxon>
        <taxon>Chordata</taxon>
        <taxon>Craniata</taxon>
        <taxon>Vertebrata</taxon>
        <taxon>Euteleostomi</taxon>
        <taxon>Mammalia</taxon>
        <taxon>Eutheria</taxon>
        <taxon>Euarchontoglires</taxon>
        <taxon>Primates</taxon>
        <taxon>Haplorrhini</taxon>
        <taxon>Platyrrhini</taxon>
        <taxon>Cebidae</taxon>
        <taxon>Cebinae</taxon>
        <taxon>Sapajus</taxon>
    </lineage>
</organism>
<sequence>MARFVVAALLVLLCLSGLEAIQHAPKIQVYSRHPAENGKPNFLNCYVSGFHPSDIEVDLLKNGKKIEKVEHSDLSFSKDWSFYLLYYTEFTPNEKDEYACRVSHVTFPTPKTVKWDRNM</sequence>
<reference key="1">
    <citation type="journal article" date="1998" name="Immunogenetics">
        <title>Beta-2-microglobulin in neotropical primates (Platyrrhini).</title>
        <authorList>
            <person name="Canavez F.C."/>
            <person name="Ladasky J.J."/>
            <person name="Muniz J.A.P.C."/>
            <person name="Seuanez H.N."/>
            <person name="Parham P."/>
        </authorList>
    </citation>
    <scope>NUCLEOTIDE SEQUENCE [GENOMIC DNA]</scope>
    <source>
        <tissue>Blood</tissue>
    </source>
</reference>
<evidence type="ECO:0000250" key="1"/>
<evidence type="ECO:0000255" key="2">
    <source>
        <dbReference type="PROSITE-ProRule" id="PRU00114"/>
    </source>
</evidence>
<evidence type="ECO:0000305" key="3"/>
<keyword id="KW-1015">Disulfide bond</keyword>
<keyword id="KW-0391">Immunity</keyword>
<keyword id="KW-0393">Immunoglobulin domain</keyword>
<keyword id="KW-0490">MHC I</keyword>
<keyword id="KW-1185">Reference proteome</keyword>
<keyword id="KW-0964">Secreted</keyword>
<keyword id="KW-0732">Signal</keyword>
<protein>
    <recommendedName>
        <fullName>Beta-2-microglobulin</fullName>
    </recommendedName>
</protein>
<gene>
    <name type="primary">B2M</name>
</gene>
<comment type="function">
    <text evidence="1">Component of the class I major histocompatibility complex (MHC). Involved in the presentation of peptide antigens to the immune system (By similarity).</text>
</comment>
<comment type="subunit">
    <text evidence="1">Heterodimer of an alpha chain and a beta chain. Beta-2-microglobulin is the beta-chain of major histocompatibility complex class I molecules (By similarity).</text>
</comment>
<comment type="subcellular location">
    <subcellularLocation>
        <location evidence="1">Secreted</location>
    </subcellularLocation>
</comment>
<comment type="similarity">
    <text evidence="3">Belongs to the beta-2-microglobulin family.</text>
</comment>
<name>B2MG_SAPAP</name>
<dbReference type="EMBL" id="AF031892">
    <property type="protein sequence ID" value="AAC39794.1"/>
    <property type="molecule type" value="Genomic_DNA"/>
</dbReference>
<dbReference type="EMBL" id="AF031890">
    <property type="protein sequence ID" value="AAC39794.1"/>
    <property type="status" value="JOINED"/>
    <property type="molecule type" value="Genomic_DNA"/>
</dbReference>
<dbReference type="EMBL" id="AF031891">
    <property type="protein sequence ID" value="AAC39794.1"/>
    <property type="status" value="JOINED"/>
    <property type="molecule type" value="Genomic_DNA"/>
</dbReference>
<dbReference type="RefSeq" id="XP_032153506.1">
    <property type="nucleotide sequence ID" value="XM_032297615.1"/>
</dbReference>
<dbReference type="SMR" id="P63066"/>
<dbReference type="GeneID" id="116564466"/>
<dbReference type="Proteomes" id="UP000504640">
    <property type="component" value="Unplaced"/>
</dbReference>
<dbReference type="GO" id="GO:0005576">
    <property type="term" value="C:extracellular region"/>
    <property type="evidence" value="ECO:0007669"/>
    <property type="project" value="UniProtKB-SubCell"/>
</dbReference>
<dbReference type="GO" id="GO:0042612">
    <property type="term" value="C:MHC class I protein complex"/>
    <property type="evidence" value="ECO:0007669"/>
    <property type="project" value="UniProtKB-KW"/>
</dbReference>
<dbReference type="GO" id="GO:0002474">
    <property type="term" value="P:antigen processing and presentation of peptide antigen via MHC class I"/>
    <property type="evidence" value="ECO:0007669"/>
    <property type="project" value="UniProtKB-KW"/>
</dbReference>
<dbReference type="GO" id="GO:0006955">
    <property type="term" value="P:immune response"/>
    <property type="evidence" value="ECO:0007669"/>
    <property type="project" value="InterPro"/>
</dbReference>
<dbReference type="CDD" id="cd05770">
    <property type="entry name" value="IgC1_beta2m"/>
    <property type="match status" value="1"/>
</dbReference>
<dbReference type="FunFam" id="2.60.40.10:FF:001005">
    <property type="entry name" value="Beta-2-microglobulin"/>
    <property type="match status" value="1"/>
</dbReference>
<dbReference type="Gene3D" id="2.60.40.10">
    <property type="entry name" value="Immunoglobulins"/>
    <property type="match status" value="1"/>
</dbReference>
<dbReference type="InterPro" id="IPR015707">
    <property type="entry name" value="B2Microglobulin"/>
</dbReference>
<dbReference type="InterPro" id="IPR007110">
    <property type="entry name" value="Ig-like_dom"/>
</dbReference>
<dbReference type="InterPro" id="IPR036179">
    <property type="entry name" value="Ig-like_dom_sf"/>
</dbReference>
<dbReference type="InterPro" id="IPR013783">
    <property type="entry name" value="Ig-like_fold"/>
</dbReference>
<dbReference type="InterPro" id="IPR003006">
    <property type="entry name" value="Ig/MHC_CS"/>
</dbReference>
<dbReference type="InterPro" id="IPR003597">
    <property type="entry name" value="Ig_C1-set"/>
</dbReference>
<dbReference type="InterPro" id="IPR050160">
    <property type="entry name" value="MHC/Immunoglobulin"/>
</dbReference>
<dbReference type="PANTHER" id="PTHR19944:SF62">
    <property type="entry name" value="BETA-2-MICROGLOBULIN"/>
    <property type="match status" value="1"/>
</dbReference>
<dbReference type="PANTHER" id="PTHR19944">
    <property type="entry name" value="MHC CLASS II-RELATED"/>
    <property type="match status" value="1"/>
</dbReference>
<dbReference type="Pfam" id="PF07654">
    <property type="entry name" value="C1-set"/>
    <property type="match status" value="1"/>
</dbReference>
<dbReference type="SMART" id="SM00407">
    <property type="entry name" value="IGc1"/>
    <property type="match status" value="1"/>
</dbReference>
<dbReference type="SUPFAM" id="SSF48726">
    <property type="entry name" value="Immunoglobulin"/>
    <property type="match status" value="1"/>
</dbReference>
<dbReference type="PROSITE" id="PS50835">
    <property type="entry name" value="IG_LIKE"/>
    <property type="match status" value="1"/>
</dbReference>
<dbReference type="PROSITE" id="PS00290">
    <property type="entry name" value="IG_MHC"/>
    <property type="match status" value="1"/>
</dbReference>